<accession>Q8S151</accession>
<accession>Q0JJP5</accession>
<reference key="1">
    <citation type="journal article" date="2003" name="Plant Cell Physiol.">
        <title>Systematic reverse genetic screening of T-DNA tagged genes in rice for functional genomic analyses: MADS-box genes as a test case.</title>
        <authorList>
            <person name="Lee S."/>
            <person name="Kim J."/>
            <person name="Son J.-S."/>
            <person name="Nam J."/>
            <person name="Jeong D.-H."/>
            <person name="Lee K."/>
            <person name="Jang S."/>
            <person name="Yoo J."/>
            <person name="Lee J."/>
            <person name="Lee D.-Y."/>
            <person name="Kang H.-G."/>
            <person name="An G."/>
        </authorList>
    </citation>
    <scope>NUCLEOTIDE SEQUENCE [MRNA]</scope>
    <source>
        <strain>cv. Dongjin</strain>
    </source>
</reference>
<reference key="2">
    <citation type="journal article" date="2002" name="Nature">
        <title>The genome sequence and structure of rice chromosome 1.</title>
        <authorList>
            <person name="Sasaki T."/>
            <person name="Matsumoto T."/>
            <person name="Yamamoto K."/>
            <person name="Sakata K."/>
            <person name="Baba T."/>
            <person name="Katayose Y."/>
            <person name="Wu J."/>
            <person name="Niimura Y."/>
            <person name="Cheng Z."/>
            <person name="Nagamura Y."/>
            <person name="Antonio B.A."/>
            <person name="Kanamori H."/>
            <person name="Hosokawa S."/>
            <person name="Masukawa M."/>
            <person name="Arikawa K."/>
            <person name="Chiden Y."/>
            <person name="Hayashi M."/>
            <person name="Okamoto M."/>
            <person name="Ando T."/>
            <person name="Aoki H."/>
            <person name="Arita K."/>
            <person name="Hamada M."/>
            <person name="Harada C."/>
            <person name="Hijishita S."/>
            <person name="Honda M."/>
            <person name="Ichikawa Y."/>
            <person name="Idonuma A."/>
            <person name="Iijima M."/>
            <person name="Ikeda M."/>
            <person name="Ikeno M."/>
            <person name="Ito S."/>
            <person name="Ito T."/>
            <person name="Ito Y."/>
            <person name="Ito Y."/>
            <person name="Iwabuchi A."/>
            <person name="Kamiya K."/>
            <person name="Karasawa W."/>
            <person name="Katagiri S."/>
            <person name="Kikuta A."/>
            <person name="Kobayashi N."/>
            <person name="Kono I."/>
            <person name="Machita K."/>
            <person name="Maehara T."/>
            <person name="Mizuno H."/>
            <person name="Mizubayashi T."/>
            <person name="Mukai Y."/>
            <person name="Nagasaki H."/>
            <person name="Nakashima M."/>
            <person name="Nakama Y."/>
            <person name="Nakamichi Y."/>
            <person name="Nakamura M."/>
            <person name="Namiki N."/>
            <person name="Negishi M."/>
            <person name="Ohta I."/>
            <person name="Ono N."/>
            <person name="Saji S."/>
            <person name="Sakai K."/>
            <person name="Shibata M."/>
            <person name="Shimokawa T."/>
            <person name="Shomura A."/>
            <person name="Song J."/>
            <person name="Takazaki Y."/>
            <person name="Terasawa K."/>
            <person name="Tsuji K."/>
            <person name="Waki K."/>
            <person name="Yamagata H."/>
            <person name="Yamane H."/>
            <person name="Yoshiki S."/>
            <person name="Yoshihara R."/>
            <person name="Yukawa K."/>
            <person name="Zhong H."/>
            <person name="Iwama H."/>
            <person name="Endo T."/>
            <person name="Ito H."/>
            <person name="Hahn J.H."/>
            <person name="Kim H.-I."/>
            <person name="Eun M.-Y."/>
            <person name="Yano M."/>
            <person name="Jiang J."/>
            <person name="Gojobori T."/>
        </authorList>
    </citation>
    <scope>NUCLEOTIDE SEQUENCE [LARGE SCALE GENOMIC DNA]</scope>
    <source>
        <strain>cv. Nipponbare</strain>
    </source>
</reference>
<reference key="3">
    <citation type="journal article" date="2005" name="Nature">
        <title>The map-based sequence of the rice genome.</title>
        <authorList>
            <consortium name="International rice genome sequencing project (IRGSP)"/>
        </authorList>
    </citation>
    <scope>NUCLEOTIDE SEQUENCE [LARGE SCALE GENOMIC DNA]</scope>
    <source>
        <strain>cv. Nipponbare</strain>
    </source>
</reference>
<reference key="4">
    <citation type="journal article" date="2008" name="Nucleic Acids Res.">
        <title>The rice annotation project database (RAP-DB): 2008 update.</title>
        <authorList>
            <consortium name="The rice annotation project (RAP)"/>
        </authorList>
    </citation>
    <scope>GENOME REANNOTATION</scope>
    <source>
        <strain>cv. Nipponbare</strain>
    </source>
</reference>
<reference key="5">
    <citation type="journal article" date="2013" name="Rice">
        <title>Improvement of the Oryza sativa Nipponbare reference genome using next generation sequence and optical map data.</title>
        <authorList>
            <person name="Kawahara Y."/>
            <person name="de la Bastide M."/>
            <person name="Hamilton J.P."/>
            <person name="Kanamori H."/>
            <person name="McCombie W.R."/>
            <person name="Ouyang S."/>
            <person name="Schwartz D.C."/>
            <person name="Tanaka T."/>
            <person name="Wu J."/>
            <person name="Zhou S."/>
            <person name="Childs K.L."/>
            <person name="Davidson R.M."/>
            <person name="Lin H."/>
            <person name="Quesada-Ocampo L."/>
            <person name="Vaillancourt B."/>
            <person name="Sakai H."/>
            <person name="Lee S.S."/>
            <person name="Kim J."/>
            <person name="Numa H."/>
            <person name="Itoh T."/>
            <person name="Buell C.R."/>
            <person name="Matsumoto T."/>
        </authorList>
    </citation>
    <scope>GENOME REANNOTATION</scope>
    <source>
        <strain>cv. Nipponbare</strain>
    </source>
</reference>
<name>MAD32_ORYSJ</name>
<evidence type="ECO:0000255" key="1">
    <source>
        <dbReference type="PROSITE-ProRule" id="PRU00251"/>
    </source>
</evidence>
<evidence type="ECO:0000255" key="2">
    <source>
        <dbReference type="PROSITE-ProRule" id="PRU00629"/>
    </source>
</evidence>
<evidence type="ECO:0000305" key="3"/>
<comment type="function">
    <text>Probable transcription factor.</text>
</comment>
<comment type="subcellular location">
    <subcellularLocation>
        <location evidence="3">Nucleus</location>
    </subcellularLocation>
</comment>
<gene>
    <name type="primary">MADS32</name>
    <name type="ordered locus">Os01g0726400</name>
    <name type="ordered locus">LOC_Os01g52680</name>
    <name type="ORF">P0042A10.22</name>
</gene>
<dbReference type="EMBL" id="AY177699">
    <property type="protein sequence ID" value="AAO47709.1"/>
    <property type="molecule type" value="mRNA"/>
</dbReference>
<dbReference type="EMBL" id="AP003343">
    <property type="protein sequence ID" value="BAB90072.1"/>
    <property type="molecule type" value="Genomic_DNA"/>
</dbReference>
<dbReference type="EMBL" id="AP008207">
    <property type="protein sequence ID" value="BAF06033.1"/>
    <property type="molecule type" value="Genomic_DNA"/>
</dbReference>
<dbReference type="EMBL" id="AP014957">
    <property type="protein sequence ID" value="BAS74129.1"/>
    <property type="molecule type" value="Genomic_DNA"/>
</dbReference>
<dbReference type="SMR" id="Q8S151"/>
<dbReference type="FunCoup" id="Q8S151">
    <property type="interactions" value="201"/>
</dbReference>
<dbReference type="STRING" id="39947.Q8S151"/>
<dbReference type="PaxDb" id="39947-Q8S151"/>
<dbReference type="EnsemblPlants" id="Os01t0726400-01">
    <property type="protein sequence ID" value="Os01t0726400-01"/>
    <property type="gene ID" value="Os01g0726400"/>
</dbReference>
<dbReference type="GeneID" id="4324731"/>
<dbReference type="Gramene" id="Os01t0726400-01">
    <property type="protein sequence ID" value="Os01t0726400-01"/>
    <property type="gene ID" value="Os01g0726400"/>
</dbReference>
<dbReference type="KEGG" id="dosa:Os01g0726400"/>
<dbReference type="KEGG" id="osa:4324731"/>
<dbReference type="eggNOG" id="KOG0014">
    <property type="taxonomic scope" value="Eukaryota"/>
</dbReference>
<dbReference type="HOGENOM" id="CLU_053053_0_4_1"/>
<dbReference type="InParanoid" id="Q8S151"/>
<dbReference type="OMA" id="NMCDLLE"/>
<dbReference type="OrthoDB" id="1898716at2759"/>
<dbReference type="Proteomes" id="UP000000763">
    <property type="component" value="Chromosome 1"/>
</dbReference>
<dbReference type="Proteomes" id="UP000059680">
    <property type="component" value="Chromosome 1"/>
</dbReference>
<dbReference type="GO" id="GO:0005634">
    <property type="term" value="C:nucleus"/>
    <property type="evidence" value="ECO:0007669"/>
    <property type="project" value="UniProtKB-SubCell"/>
</dbReference>
<dbReference type="GO" id="GO:0000981">
    <property type="term" value="F:DNA-binding transcription factor activity, RNA polymerase II-specific"/>
    <property type="evidence" value="ECO:0000318"/>
    <property type="project" value="GO_Central"/>
</dbReference>
<dbReference type="GO" id="GO:0046983">
    <property type="term" value="F:protein dimerization activity"/>
    <property type="evidence" value="ECO:0007669"/>
    <property type="project" value="InterPro"/>
</dbReference>
<dbReference type="GO" id="GO:0000978">
    <property type="term" value="F:RNA polymerase II cis-regulatory region sequence-specific DNA binding"/>
    <property type="evidence" value="ECO:0000318"/>
    <property type="project" value="GO_Central"/>
</dbReference>
<dbReference type="GO" id="GO:0006357">
    <property type="term" value="P:regulation of transcription by RNA polymerase II"/>
    <property type="evidence" value="ECO:0000318"/>
    <property type="project" value="GO_Central"/>
</dbReference>
<dbReference type="FunFam" id="3.40.1810.10:FF:000015">
    <property type="entry name" value="MADS-box transcription factor 32"/>
    <property type="match status" value="1"/>
</dbReference>
<dbReference type="Gene3D" id="3.40.1810.10">
    <property type="entry name" value="Transcription factor, MADS-box"/>
    <property type="match status" value="1"/>
</dbReference>
<dbReference type="InterPro" id="IPR050142">
    <property type="entry name" value="MADS-box/MEF2_TF"/>
</dbReference>
<dbReference type="InterPro" id="IPR002487">
    <property type="entry name" value="TF_Kbox"/>
</dbReference>
<dbReference type="InterPro" id="IPR002100">
    <property type="entry name" value="TF_MADSbox"/>
</dbReference>
<dbReference type="InterPro" id="IPR036879">
    <property type="entry name" value="TF_MADSbox_sf"/>
</dbReference>
<dbReference type="PANTHER" id="PTHR48019">
    <property type="entry name" value="SERUM RESPONSE FACTOR HOMOLOG"/>
    <property type="match status" value="1"/>
</dbReference>
<dbReference type="Pfam" id="PF01486">
    <property type="entry name" value="K-box"/>
    <property type="match status" value="1"/>
</dbReference>
<dbReference type="Pfam" id="PF00319">
    <property type="entry name" value="SRF-TF"/>
    <property type="match status" value="1"/>
</dbReference>
<dbReference type="PRINTS" id="PR00404">
    <property type="entry name" value="MADSDOMAIN"/>
</dbReference>
<dbReference type="SMART" id="SM00432">
    <property type="entry name" value="MADS"/>
    <property type="match status" value="1"/>
</dbReference>
<dbReference type="SUPFAM" id="SSF55455">
    <property type="entry name" value="SRF-like"/>
    <property type="match status" value="1"/>
</dbReference>
<dbReference type="PROSITE" id="PS51297">
    <property type="entry name" value="K_BOX"/>
    <property type="match status" value="1"/>
</dbReference>
<dbReference type="PROSITE" id="PS00350">
    <property type="entry name" value="MADS_BOX_1"/>
    <property type="match status" value="1"/>
</dbReference>
<dbReference type="PROSITE" id="PS50066">
    <property type="entry name" value="MADS_BOX_2"/>
    <property type="match status" value="1"/>
</dbReference>
<feature type="chain" id="PRO_0000229912" description="MADS-box transcription factor 32">
    <location>
        <begin position="1"/>
        <end position="196"/>
    </location>
</feature>
<feature type="domain" description="MADS-box" evidence="1">
    <location>
        <begin position="1"/>
        <end position="61"/>
    </location>
</feature>
<feature type="domain" description="K-box" evidence="2">
    <location>
        <begin position="85"/>
        <end position="175"/>
    </location>
</feature>
<proteinExistence type="evidence at transcript level"/>
<organism>
    <name type="scientific">Oryza sativa subsp. japonica</name>
    <name type="common">Rice</name>
    <dbReference type="NCBI Taxonomy" id="39947"/>
    <lineage>
        <taxon>Eukaryota</taxon>
        <taxon>Viridiplantae</taxon>
        <taxon>Streptophyta</taxon>
        <taxon>Embryophyta</taxon>
        <taxon>Tracheophyta</taxon>
        <taxon>Spermatophyta</taxon>
        <taxon>Magnoliopsida</taxon>
        <taxon>Liliopsida</taxon>
        <taxon>Poales</taxon>
        <taxon>Poaceae</taxon>
        <taxon>BOP clade</taxon>
        <taxon>Oryzoideae</taxon>
        <taxon>Oryzeae</taxon>
        <taxon>Oryzinae</taxon>
        <taxon>Oryza</taxon>
        <taxon>Oryza sativa</taxon>
    </lineage>
</organism>
<sequence length="196" mass="22532">MGRGRSEIKRIENPTQRQSTFYKRRDGLFKKARELAVLCDADLLLLLFSASGKLYHFLSPTVPSVREFVERYEATTHTKVWADIRQERRAELEKVGSMCDLLEKQLRFMTVDDGEEYTVPSLEALEHNLEAAMRKVRSEKDRKIGGEICYLQNIIRGRQEERYGLCDKIAHAQTLKDVECGSTSLSNGLDLKLGFN</sequence>
<protein>
    <recommendedName>
        <fullName>MADS-box transcription factor 32</fullName>
    </recommendedName>
    <alternativeName>
        <fullName>OsMADS32</fullName>
    </alternativeName>
</protein>
<keyword id="KW-0238">DNA-binding</keyword>
<keyword id="KW-0539">Nucleus</keyword>
<keyword id="KW-1185">Reference proteome</keyword>
<keyword id="KW-0804">Transcription</keyword>
<keyword id="KW-0805">Transcription regulation</keyword>